<reference key="1">
    <citation type="journal article" date="2001" name="Mol. Microbiol.">
        <title>Lre1 affects chitinase expression, trehalose accumulation and heat resistance through inhibition of the Cbk1 protein kinase in Saccharomyces cerevisiae.</title>
        <authorList>
            <person name="Versele M."/>
            <person name="Thevelein J.M."/>
        </authorList>
    </citation>
    <scope>NUCLEOTIDE SEQUENCE [GENOMIC DNA]</scope>
    <scope>FUNCTION</scope>
</reference>
<reference key="2">
    <citation type="journal article" date="1992" name="Nature">
        <title>The complete DNA sequence of yeast chromosome III.</title>
        <authorList>
            <person name="Oliver S.G."/>
            <person name="van der Aart Q.J.M."/>
            <person name="Agostoni-Carbone M.L."/>
            <person name="Aigle M."/>
            <person name="Alberghina L."/>
            <person name="Alexandraki D."/>
            <person name="Antoine G."/>
            <person name="Anwar R."/>
            <person name="Ballesta J.P.G."/>
            <person name="Benit P."/>
            <person name="Berben G."/>
            <person name="Bergantino E."/>
            <person name="Biteau N."/>
            <person name="Bolle P.-A."/>
            <person name="Bolotin-Fukuhara M."/>
            <person name="Brown A."/>
            <person name="Brown A.J.P."/>
            <person name="Buhler J.-M."/>
            <person name="Carcano C."/>
            <person name="Carignani G."/>
            <person name="Cederberg H."/>
            <person name="Chanet R."/>
            <person name="Contreras R."/>
            <person name="Crouzet M."/>
            <person name="Daignan-Fornier B."/>
            <person name="Defoor E."/>
            <person name="Delgado M.D."/>
            <person name="Demolder J."/>
            <person name="Doira C."/>
            <person name="Dubois E."/>
            <person name="Dujon B."/>
            <person name="Duesterhoeft A."/>
            <person name="Erdmann D."/>
            <person name="Esteban M."/>
            <person name="Fabre F."/>
            <person name="Fairhead C."/>
            <person name="Faye G."/>
            <person name="Feldmann H."/>
            <person name="Fiers W."/>
            <person name="Francingues-Gaillard M.-C."/>
            <person name="Franco L."/>
            <person name="Frontali L."/>
            <person name="Fukuhara H."/>
            <person name="Fuller L.J."/>
            <person name="Galland P."/>
            <person name="Gent M.E."/>
            <person name="Gigot D."/>
            <person name="Gilliquet V."/>
            <person name="Glansdorff N."/>
            <person name="Goffeau A."/>
            <person name="Grenson M."/>
            <person name="Grisanti P."/>
            <person name="Grivell L.A."/>
            <person name="de Haan M."/>
            <person name="Haasemann M."/>
            <person name="Hatat D."/>
            <person name="Hoenicka J."/>
            <person name="Hegemann J.H."/>
            <person name="Herbert C.J."/>
            <person name="Hilger F."/>
            <person name="Hohmann S."/>
            <person name="Hollenberg C.P."/>
            <person name="Huse K."/>
            <person name="Iborra F."/>
            <person name="Indge K.J."/>
            <person name="Isono K."/>
            <person name="Jacq C."/>
            <person name="Jacquet M."/>
            <person name="James C.M."/>
            <person name="Jauniaux J.-C."/>
            <person name="Jia Y."/>
            <person name="Jimenez A."/>
            <person name="Kelly A."/>
            <person name="Kleinhans U."/>
            <person name="Kreisl P."/>
            <person name="Lanfranchi G."/>
            <person name="Lewis C."/>
            <person name="van der Linden C.G."/>
            <person name="Lucchini G."/>
            <person name="Lutzenkirchen K."/>
            <person name="Maat M.J."/>
            <person name="Mallet L."/>
            <person name="Mannhaupt G."/>
            <person name="Martegani E."/>
            <person name="Mathieu A."/>
            <person name="Maurer C.T.C."/>
            <person name="McConnell D."/>
            <person name="McKee R.A."/>
            <person name="Messenguy F."/>
            <person name="Mewes H.-W."/>
            <person name="Molemans F."/>
            <person name="Montague M.A."/>
            <person name="Muzi Falconi M."/>
            <person name="Navas L."/>
            <person name="Newlon C.S."/>
            <person name="Noone D."/>
            <person name="Pallier C."/>
            <person name="Panzeri L."/>
            <person name="Pearson B.M."/>
            <person name="Perea J."/>
            <person name="Philippsen P."/>
            <person name="Pierard A."/>
            <person name="Planta R.J."/>
            <person name="Plevani P."/>
            <person name="Poetsch B."/>
            <person name="Pohl F.M."/>
            <person name="Purnelle B."/>
            <person name="Ramezani Rad M."/>
            <person name="Rasmussen S.W."/>
            <person name="Raynal A."/>
            <person name="Remacha M.A."/>
            <person name="Richterich P."/>
            <person name="Roberts A.B."/>
            <person name="Rodriguez F."/>
            <person name="Sanz E."/>
            <person name="Schaaff-Gerstenschlaeger I."/>
            <person name="Scherens B."/>
            <person name="Schweitzer B."/>
            <person name="Shu Y."/>
            <person name="Skala J."/>
            <person name="Slonimski P.P."/>
            <person name="Sor F."/>
            <person name="Soustelle C."/>
            <person name="Spiegelberg R."/>
            <person name="Stateva L.I."/>
            <person name="Steensma H.Y."/>
            <person name="Steiner S."/>
            <person name="Thierry A."/>
            <person name="Thireos G."/>
            <person name="Tzermia M."/>
            <person name="Urrestarazu L.A."/>
            <person name="Valle G."/>
            <person name="Vetter I."/>
            <person name="van Vliet-Reedijk J.C."/>
            <person name="Voet M."/>
            <person name="Volckaert G."/>
            <person name="Vreken P."/>
            <person name="Wang H."/>
            <person name="Warmington J.R."/>
            <person name="von Wettstein D."/>
            <person name="Wicksteed B.L."/>
            <person name="Wilson C."/>
            <person name="Wurst H."/>
            <person name="Xu G."/>
            <person name="Yoshikawa A."/>
            <person name="Zimmermann F.K."/>
            <person name="Sgouros J.G."/>
        </authorList>
    </citation>
    <scope>NUCLEOTIDE SEQUENCE [LARGE SCALE GENOMIC DNA]</scope>
    <source>
        <strain>ATCC 204508 / S288c</strain>
    </source>
</reference>
<reference key="3">
    <citation type="submission" date="2001-06" db="EMBL/GenBank/DDBJ databases">
        <authorList>
            <person name="Valles G."/>
            <person name="Volckaerts G."/>
        </authorList>
    </citation>
    <scope>SEQUENCE REVISION TO 511; 554 AND C-TERMINUS</scope>
</reference>
<reference key="4">
    <citation type="journal article" date="2014" name="G3 (Bethesda)">
        <title>The reference genome sequence of Saccharomyces cerevisiae: Then and now.</title>
        <authorList>
            <person name="Engel S.R."/>
            <person name="Dietrich F.S."/>
            <person name="Fisk D.G."/>
            <person name="Binkley G."/>
            <person name="Balakrishnan R."/>
            <person name="Costanzo M.C."/>
            <person name="Dwight S.S."/>
            <person name="Hitz B.C."/>
            <person name="Karra K."/>
            <person name="Nash R.S."/>
            <person name="Weng S."/>
            <person name="Wong E.D."/>
            <person name="Lloyd P."/>
            <person name="Skrzypek M.S."/>
            <person name="Miyasato S.R."/>
            <person name="Simison M."/>
            <person name="Cherry J.M."/>
        </authorList>
    </citation>
    <scope>GENOME REANNOTATION</scope>
    <source>
        <strain>ATCC 204508 / S288c</strain>
    </source>
</reference>
<reference key="5">
    <citation type="journal article" date="1997" name="Yeast">
        <title>Multiple copies of PBS2, MHP1 or LRE1 produce glucanase resistance and other cell wall effects in Saccharomyces cerevisiae.</title>
        <authorList>
            <person name="Lai M.H."/>
            <person name="Silverman S.J."/>
            <person name="Gaughran J.P."/>
            <person name="Kirsch D.R."/>
        </authorList>
    </citation>
    <scope>CHARACTERIZATION</scope>
</reference>
<reference key="6">
    <citation type="journal article" date="2001" name="Mol. Microbiol.">
        <title>Hyperosmotic stress response and regulation of cell wall integrity in Saccharomyces cerevisiae share common functional aspects.</title>
        <authorList>
            <person name="Alonso-Monge R."/>
            <person name="Real E."/>
            <person name="Wojda I."/>
            <person name="Bebelman J.-P."/>
            <person name="Mager W.H."/>
            <person name="Siderius M."/>
        </authorList>
    </citation>
    <scope>FUNCTION</scope>
</reference>
<reference key="7">
    <citation type="journal article" date="2003" name="Nature">
        <title>Targets of the cyclin-dependent kinase Cdk1.</title>
        <authorList>
            <person name="Ubersax J.A."/>
            <person name="Woodbury E.L."/>
            <person name="Quang P.N."/>
            <person name="Paraz M."/>
            <person name="Blethrow J.D."/>
            <person name="Shah K."/>
            <person name="Shokat K.M."/>
            <person name="Morgan D.O."/>
        </authorList>
    </citation>
    <scope>PHOSPHORYLATION BY CDC28</scope>
</reference>
<reference key="8">
    <citation type="journal article" date="2008" name="Mol. Cell. Proteomics">
        <title>A multidimensional chromatography technology for in-depth phosphoproteome analysis.</title>
        <authorList>
            <person name="Albuquerque C.P."/>
            <person name="Smolka M.B."/>
            <person name="Payne S.H."/>
            <person name="Bafna V."/>
            <person name="Eng J."/>
            <person name="Zhou H."/>
        </authorList>
    </citation>
    <scope>PHOSPHORYLATION [LARGE SCALE ANALYSIS] AT SER-516</scope>
    <scope>IDENTIFICATION BY MASS SPECTROMETRY [LARGE SCALE ANALYSIS]</scope>
</reference>
<reference key="9">
    <citation type="journal article" date="2009" name="Science">
        <title>Global analysis of Cdk1 substrate phosphorylation sites provides insights into evolution.</title>
        <authorList>
            <person name="Holt L.J."/>
            <person name="Tuch B.B."/>
            <person name="Villen J."/>
            <person name="Johnson A.D."/>
            <person name="Gygi S.P."/>
            <person name="Morgan D.O."/>
        </authorList>
    </citation>
    <scope>PHOSPHORYLATION [LARGE SCALE ANALYSIS] AT SER-393; SER-398 AND SER-552</scope>
    <scope>IDENTIFICATION BY MASS SPECTROMETRY [LARGE SCALE ANALYSIS]</scope>
</reference>
<keyword id="KW-0597">Phosphoprotein</keyword>
<keyword id="KW-0649">Protein kinase inhibitor</keyword>
<keyword id="KW-1185">Reference proteome</keyword>
<evidence type="ECO:0000256" key="1">
    <source>
        <dbReference type="SAM" id="MobiDB-lite"/>
    </source>
</evidence>
<evidence type="ECO:0000269" key="2">
    <source>
    </source>
</evidence>
<evidence type="ECO:0000269" key="3">
    <source>
    </source>
</evidence>
<evidence type="ECO:0000269" key="4">
    <source>
    </source>
</evidence>
<evidence type="ECO:0007744" key="5">
    <source>
    </source>
</evidence>
<evidence type="ECO:0007744" key="6">
    <source>
    </source>
</evidence>
<name>LRE1_YEAST</name>
<feature type="chain" id="PRO_0000084482" description="Laminarase-resistance protein LRE1">
    <location>
        <begin position="1"/>
        <end position="583"/>
    </location>
</feature>
<feature type="region of interest" description="Disordered" evidence="1">
    <location>
        <begin position="1"/>
        <end position="31"/>
    </location>
</feature>
<feature type="region of interest" description="Disordered" evidence="1">
    <location>
        <begin position="330"/>
        <end position="380"/>
    </location>
</feature>
<feature type="region of interest" description="Disordered" evidence="1">
    <location>
        <begin position="457"/>
        <end position="486"/>
    </location>
</feature>
<feature type="compositionally biased region" description="Polar residues" evidence="1">
    <location>
        <begin position="1"/>
        <end position="24"/>
    </location>
</feature>
<feature type="compositionally biased region" description="Basic and acidic residues" evidence="1">
    <location>
        <begin position="332"/>
        <end position="342"/>
    </location>
</feature>
<feature type="compositionally biased region" description="Basic and acidic residues" evidence="1">
    <location>
        <begin position="354"/>
        <end position="366"/>
    </location>
</feature>
<feature type="compositionally biased region" description="Basic and acidic residues" evidence="1">
    <location>
        <begin position="461"/>
        <end position="479"/>
    </location>
</feature>
<feature type="modified residue" description="Phosphoserine" evidence="6">
    <location>
        <position position="393"/>
    </location>
</feature>
<feature type="modified residue" description="Phosphoserine" evidence="6">
    <location>
        <position position="398"/>
    </location>
</feature>
<feature type="modified residue" description="Phosphoserine" evidence="5">
    <location>
        <position position="516"/>
    </location>
</feature>
<feature type="modified residue" description="Phosphoserine" evidence="6">
    <location>
        <position position="552"/>
    </location>
</feature>
<organism>
    <name type="scientific">Saccharomyces cerevisiae (strain ATCC 204508 / S288c)</name>
    <name type="common">Baker's yeast</name>
    <dbReference type="NCBI Taxonomy" id="559292"/>
    <lineage>
        <taxon>Eukaryota</taxon>
        <taxon>Fungi</taxon>
        <taxon>Dikarya</taxon>
        <taxon>Ascomycota</taxon>
        <taxon>Saccharomycotina</taxon>
        <taxon>Saccharomycetes</taxon>
        <taxon>Saccharomycetales</taxon>
        <taxon>Saccharomycetaceae</taxon>
        <taxon>Saccharomyces</taxon>
    </lineage>
</organism>
<comment type="function">
    <text evidence="2 3">Overexpression affects chitinase expression, cell separation and budding pattern, and increases trehalose accumulation and heat resistance by inhibiting protein kinase CBK1. Overexpression also suppresses temperature-induced hyperosmosensitivity and sensitivity to cell wall degrading enzymes. Overexpression of both LRE1 and PBN1 confers resistance to laminarinase.</text>
</comment>
<comment type="PTM">
    <text evidence="4">Phosphorylated by CDC28/CDK1.</text>
</comment>
<sequence>MPNTHTQHVQISEPNPVNTLSTPSKRGHRHRRSLAISGDFDFLKQPAAIVNLPPPQAAENCPSTAPTAVSSTLSPIRYNRFPCKTNEDAGTLDLPEPRFYPLSPKNNLQTPSPRFFISEEPSFSSPVKGVPDAIINLDDALKTRPRSFKSHRRSESAPPDLEVMVDKGNCAAGSNSMIKEEEDSLIEPESKNEYYEQKLPTALLSPLRPSLCVSEQAIDVDDSALNGSPTHHNHGMQNANARNSNTFNSLKIKGQKQRYYHYTKQLPLTVGCDSQSPKEQRSAASMTINQAMTPSSLAYTPSKLASTPATPVSFYDSNADINLESDNFPLKDNPRYAKDGYPKKCGNSQLNRVLDSDKRQDFSGESRRRRSGSPISHMQHRNLIDNMKGRRNSNTINSIFNYKSQHYEMPYDDMMKNENINAQSMPFSVNGVNNENSIGGVITRADDAPLQHSVVKSCTPDGKEEMNRLKSNDSNEYSKSEGQIRTNSQLSKDILMGEPGDMVDLSSFVNAQRKASNETGDLVFSLSQDDDALKTFHASNSAATSNESWCISDDALGKQAQDSEVRRKRKSKLGLFRHIFSRK</sequence>
<gene>
    <name type="primary">LRE1</name>
    <name type="ordered locus">YCL051W</name>
    <name type="ORF">YCL51W</name>
</gene>
<protein>
    <recommendedName>
        <fullName>Laminarase-resistance protein LRE1</fullName>
    </recommendedName>
</protein>
<dbReference type="EMBL" id="X59720">
    <property type="protein sequence ID" value="CAA42393.2"/>
    <property type="molecule type" value="Genomic_DNA"/>
</dbReference>
<dbReference type="EMBL" id="BK006937">
    <property type="protein sequence ID" value="DAA07434.1"/>
    <property type="molecule type" value="Genomic_DNA"/>
</dbReference>
<dbReference type="PIR" id="S19381">
    <property type="entry name" value="S19381"/>
</dbReference>
<dbReference type="RefSeq" id="NP_009879.2">
    <property type="nucleotide sequence ID" value="NM_001178696.1"/>
</dbReference>
<dbReference type="BioGRID" id="30934">
    <property type="interactions" value="88"/>
</dbReference>
<dbReference type="DIP" id="DIP-3880N"/>
<dbReference type="FunCoup" id="P25579">
    <property type="interactions" value="103"/>
</dbReference>
<dbReference type="IntAct" id="P25579">
    <property type="interactions" value="11"/>
</dbReference>
<dbReference type="MINT" id="P25579"/>
<dbReference type="STRING" id="4932.YCL051W"/>
<dbReference type="iPTMnet" id="P25579"/>
<dbReference type="PaxDb" id="4932-YCL051W"/>
<dbReference type="PeptideAtlas" id="P25579"/>
<dbReference type="EnsemblFungi" id="YCL051W_mRNA">
    <property type="protein sequence ID" value="YCL051W"/>
    <property type="gene ID" value="YCL051W"/>
</dbReference>
<dbReference type="GeneID" id="850306"/>
<dbReference type="KEGG" id="sce:YCL051W"/>
<dbReference type="AGR" id="SGD:S000000556"/>
<dbReference type="SGD" id="S000000556">
    <property type="gene designation" value="LRE1"/>
</dbReference>
<dbReference type="VEuPathDB" id="FungiDB:YCL051W"/>
<dbReference type="eggNOG" id="ENOG502RXFV">
    <property type="taxonomic scope" value="Eukaryota"/>
</dbReference>
<dbReference type="GeneTree" id="ENSGT00940000176546"/>
<dbReference type="HOGENOM" id="CLU_026385_0_0_1"/>
<dbReference type="InParanoid" id="P25579"/>
<dbReference type="OMA" id="NINAQSM"/>
<dbReference type="OrthoDB" id="3981301at2759"/>
<dbReference type="BioCyc" id="YEAST:G3O-29305-MONOMER"/>
<dbReference type="BioGRID-ORCS" id="850306">
    <property type="hits" value="1 hit in 10 CRISPR screens"/>
</dbReference>
<dbReference type="PRO" id="PR:P25579"/>
<dbReference type="Proteomes" id="UP000002311">
    <property type="component" value="Chromosome III"/>
</dbReference>
<dbReference type="RNAct" id="P25579">
    <property type="molecule type" value="protein"/>
</dbReference>
<dbReference type="GO" id="GO:0005935">
    <property type="term" value="C:cellular bud neck"/>
    <property type="evidence" value="ECO:0000314"/>
    <property type="project" value="SGD"/>
</dbReference>
<dbReference type="GO" id="GO:0004860">
    <property type="term" value="F:protein kinase inhibitor activity"/>
    <property type="evidence" value="ECO:0000314"/>
    <property type="project" value="SGD"/>
</dbReference>
<dbReference type="GO" id="GO:0031505">
    <property type="term" value="P:fungal-type cell wall organization"/>
    <property type="evidence" value="ECO:0000315"/>
    <property type="project" value="SGD"/>
</dbReference>
<accession>P25579</accession>
<accession>D6VQW5</accession>
<proteinExistence type="evidence at protein level"/>